<dbReference type="EC" id="1.14.-.-"/>
<dbReference type="EMBL" id="LT708304">
    <property type="protein sequence ID" value="SIU00911.1"/>
    <property type="molecule type" value="Genomic_DNA"/>
</dbReference>
<dbReference type="RefSeq" id="NP_855948.1">
    <property type="nucleotide sequence ID" value="NC_002945.3"/>
</dbReference>
<dbReference type="RefSeq" id="WP_003411685.1">
    <property type="nucleotide sequence ID" value="NC_002945.4"/>
</dbReference>
<dbReference type="PDB" id="5EDT">
    <property type="method" value="X-ray"/>
    <property type="resolution" value="2.45 A"/>
    <property type="chains" value="A=2-396"/>
</dbReference>
<dbReference type="PDBsum" id="5EDT"/>
<dbReference type="SMR" id="P0A515"/>
<dbReference type="KEGG" id="mbo:BQ2027_MB2299"/>
<dbReference type="PATRIC" id="fig|233413.5.peg.2524"/>
<dbReference type="EvolutionaryTrace" id="P0A515"/>
<dbReference type="Proteomes" id="UP000001419">
    <property type="component" value="Chromosome"/>
</dbReference>
<dbReference type="GO" id="GO:0005737">
    <property type="term" value="C:cytoplasm"/>
    <property type="evidence" value="ECO:0007669"/>
    <property type="project" value="UniProtKB-SubCell"/>
</dbReference>
<dbReference type="GO" id="GO:0020037">
    <property type="term" value="F:heme binding"/>
    <property type="evidence" value="ECO:0007669"/>
    <property type="project" value="InterPro"/>
</dbReference>
<dbReference type="GO" id="GO:0005506">
    <property type="term" value="F:iron ion binding"/>
    <property type="evidence" value="ECO:0007669"/>
    <property type="project" value="InterPro"/>
</dbReference>
<dbReference type="GO" id="GO:0004497">
    <property type="term" value="F:monooxygenase activity"/>
    <property type="evidence" value="ECO:0007669"/>
    <property type="project" value="UniProtKB-KW"/>
</dbReference>
<dbReference type="GO" id="GO:0016705">
    <property type="term" value="F:oxidoreductase activity, acting on paired donors, with incorporation or reduction of molecular oxygen"/>
    <property type="evidence" value="ECO:0007669"/>
    <property type="project" value="InterPro"/>
</dbReference>
<dbReference type="FunFam" id="1.10.630.10:FF:000142">
    <property type="entry name" value="Mycocyclosin synthase"/>
    <property type="match status" value="1"/>
</dbReference>
<dbReference type="Gene3D" id="1.10.630.10">
    <property type="entry name" value="Cytochrome P450"/>
    <property type="match status" value="1"/>
</dbReference>
<dbReference type="InterPro" id="IPR001128">
    <property type="entry name" value="Cyt_P450"/>
</dbReference>
<dbReference type="InterPro" id="IPR002397">
    <property type="entry name" value="Cyt_P450_B"/>
</dbReference>
<dbReference type="InterPro" id="IPR017972">
    <property type="entry name" value="Cyt_P450_CS"/>
</dbReference>
<dbReference type="InterPro" id="IPR036396">
    <property type="entry name" value="Cyt_P450_sf"/>
</dbReference>
<dbReference type="PANTHER" id="PTHR46696:SF1">
    <property type="entry name" value="CYTOCHROME P450 YJIB-RELATED"/>
    <property type="match status" value="1"/>
</dbReference>
<dbReference type="PANTHER" id="PTHR46696">
    <property type="entry name" value="P450, PUTATIVE (EUROFUNG)-RELATED"/>
    <property type="match status" value="1"/>
</dbReference>
<dbReference type="Pfam" id="PF00067">
    <property type="entry name" value="p450"/>
    <property type="match status" value="1"/>
</dbReference>
<dbReference type="PRINTS" id="PR00359">
    <property type="entry name" value="BP450"/>
</dbReference>
<dbReference type="SUPFAM" id="SSF48264">
    <property type="entry name" value="Cytochrome P450"/>
    <property type="match status" value="1"/>
</dbReference>
<dbReference type="PROSITE" id="PS00086">
    <property type="entry name" value="CYTOCHROME_P450"/>
    <property type="match status" value="1"/>
</dbReference>
<proteinExistence type="evidence at protein level"/>
<organism>
    <name type="scientific">Mycobacterium bovis (strain ATCC BAA-935 / AF2122/97)</name>
    <dbReference type="NCBI Taxonomy" id="233413"/>
    <lineage>
        <taxon>Bacteria</taxon>
        <taxon>Bacillati</taxon>
        <taxon>Actinomycetota</taxon>
        <taxon>Actinomycetes</taxon>
        <taxon>Mycobacteriales</taxon>
        <taxon>Mycobacteriaceae</taxon>
        <taxon>Mycobacterium</taxon>
        <taxon>Mycobacterium tuberculosis complex</taxon>
    </lineage>
</organism>
<reference key="1">
    <citation type="journal article" date="2003" name="Proc. Natl. Acad. Sci. U.S.A.">
        <title>The complete genome sequence of Mycobacterium bovis.</title>
        <authorList>
            <person name="Garnier T."/>
            <person name="Eiglmeier K."/>
            <person name="Camus J.-C."/>
            <person name="Medina N."/>
            <person name="Mansoor H."/>
            <person name="Pryor M."/>
            <person name="Duthoy S."/>
            <person name="Grondin S."/>
            <person name="Lacroix C."/>
            <person name="Monsempe C."/>
            <person name="Simon S."/>
            <person name="Harris B."/>
            <person name="Atkin R."/>
            <person name="Doggett J."/>
            <person name="Mayes R."/>
            <person name="Keating L."/>
            <person name="Wheeler P.R."/>
            <person name="Parkhill J."/>
            <person name="Barrell B.G."/>
            <person name="Cole S.T."/>
            <person name="Gordon S.V."/>
            <person name="Hewinson R.G."/>
        </authorList>
    </citation>
    <scope>NUCLEOTIDE SEQUENCE [LARGE SCALE GENOMIC DNA]</scope>
    <source>
        <strain>ATCC BAA-935 / AF2122/97</strain>
    </source>
</reference>
<reference key="2">
    <citation type="journal article" date="2017" name="Genome Announc.">
        <title>Updated reference genome sequence and annotation of Mycobacterium bovis AF2122/97.</title>
        <authorList>
            <person name="Malone K.M."/>
            <person name="Farrell D."/>
            <person name="Stuber T.P."/>
            <person name="Schubert O.T."/>
            <person name="Aebersold R."/>
            <person name="Robbe-Austerman S."/>
            <person name="Gordon S.V."/>
        </authorList>
    </citation>
    <scope>NUCLEOTIDE SEQUENCE [LARGE SCALE GENOMIC DNA]</scope>
    <scope>GENOME REANNOTATION</scope>
    <source>
        <strain>ATCC BAA-935 / AF2122/97</strain>
    </source>
</reference>
<keyword id="KW-0002">3D-structure</keyword>
<keyword id="KW-0963">Cytoplasm</keyword>
<keyword id="KW-0349">Heme</keyword>
<keyword id="KW-0408">Iron</keyword>
<keyword id="KW-0479">Metal-binding</keyword>
<keyword id="KW-0503">Monooxygenase</keyword>
<keyword id="KW-0560">Oxidoreductase</keyword>
<keyword id="KW-1185">Reference proteome</keyword>
<accession>P0A515</accession>
<accession>A0A1R3Y0Q8</accession>
<accession>Q59571</accession>
<accession>X2BJT7</accession>
<evidence type="ECO:0000250" key="1"/>
<evidence type="ECO:0000305" key="2"/>
<evidence type="ECO:0007829" key="3">
    <source>
        <dbReference type="PDB" id="5EDT"/>
    </source>
</evidence>
<name>CP121_MYCBO</name>
<protein>
    <recommendedName>
        <fullName>Cytochrome P450 121</fullName>
        <ecNumber>1.14.-.-</ecNumber>
    </recommendedName>
    <alternativeName>
        <fullName>Cytochrome P450 MT2</fullName>
    </alternativeName>
</protein>
<gene>
    <name type="primary">cyp121</name>
    <name type="ordered locus">BQ2027_MB2299</name>
</gene>
<sequence length="396" mass="43256">MTATVLLEVPFSARGDRIPDAVAELRTREPIRKVRTITGAEAWLVSSYALCTQVLEDRRFSMKETAAAGAPRLNALTVPPEVVNNMGNIADAGLRKAVMKAITPKAPGLEQFLRDTANSLLDNLITEGAPADLRNDFADPLATALHCKVLGIPQEDGPKLFRSLSIAFMSSADPIPAAKINWDRDIEYMAGILENPNITTGLMGELSRLRKDPAYSHVSDELFATIGVTFFGAGVISTGSFLTTALISLIQRPQLRNLLHEKPELIPAGVEELLRINLSFADGLPRLATADIQVGDVLVRKGELVLVLLEGANFDPEHFPNPGSIELDRPNPTSHLAFGRGQHFCPGSALGRRHAQIGIEALLKKMPGVDLAVPIDQLVWRTRFQRRIPERLPVLW</sequence>
<comment type="cofactor">
    <cofactor evidence="1">
        <name>heme</name>
        <dbReference type="ChEBI" id="CHEBI:30413"/>
    </cofactor>
</comment>
<comment type="subcellular location">
    <subcellularLocation>
        <location evidence="1">Cytoplasm</location>
    </subcellularLocation>
</comment>
<comment type="similarity">
    <text evidence="2">Belongs to the cytochrome P450 family.</text>
</comment>
<feature type="chain" id="PRO_0000052273" description="Cytochrome P450 121">
    <location>
        <begin position="1"/>
        <end position="396"/>
    </location>
</feature>
<feature type="binding site" description="axial binding residue">
    <location>
        <position position="345"/>
    </location>
    <ligand>
        <name>heme</name>
        <dbReference type="ChEBI" id="CHEBI:30413"/>
    </ligand>
    <ligandPart>
        <name>Fe</name>
        <dbReference type="ChEBI" id="CHEBI:18248"/>
    </ligandPart>
</feature>
<feature type="helix" evidence="3">
    <location>
        <begin position="21"/>
        <end position="28"/>
    </location>
</feature>
<feature type="strand" evidence="3">
    <location>
        <begin position="30"/>
        <end position="35"/>
    </location>
</feature>
<feature type="strand" evidence="3">
    <location>
        <begin position="41"/>
        <end position="45"/>
    </location>
</feature>
<feature type="helix" evidence="3">
    <location>
        <begin position="48"/>
        <end position="56"/>
    </location>
</feature>
<feature type="strand" evidence="3">
    <location>
        <begin position="60"/>
        <end position="62"/>
    </location>
</feature>
<feature type="helix" evidence="3">
    <location>
        <begin position="63"/>
        <end position="66"/>
    </location>
</feature>
<feature type="helix" evidence="3">
    <location>
        <begin position="80"/>
        <end position="83"/>
    </location>
</feature>
<feature type="helix" evidence="3">
    <location>
        <begin position="85"/>
        <end position="91"/>
    </location>
</feature>
<feature type="helix" evidence="3">
    <location>
        <begin position="95"/>
        <end position="101"/>
    </location>
</feature>
<feature type="helix" evidence="3">
    <location>
        <begin position="109"/>
        <end position="127"/>
    </location>
</feature>
<feature type="strand" evidence="3">
    <location>
        <begin position="129"/>
        <end position="132"/>
    </location>
</feature>
<feature type="turn" evidence="3">
    <location>
        <begin position="133"/>
        <end position="137"/>
    </location>
</feature>
<feature type="helix" evidence="3">
    <location>
        <begin position="138"/>
        <end position="150"/>
    </location>
</feature>
<feature type="helix" evidence="3">
    <location>
        <begin position="154"/>
        <end position="156"/>
    </location>
</feature>
<feature type="helix" evidence="3">
    <location>
        <begin position="157"/>
        <end position="161"/>
    </location>
</feature>
<feature type="helix" evidence="3">
    <location>
        <begin position="164"/>
        <end position="167"/>
    </location>
</feature>
<feature type="helix" evidence="3">
    <location>
        <begin position="176"/>
        <end position="193"/>
    </location>
</feature>
<feature type="helix" evidence="3">
    <location>
        <begin position="201"/>
        <end position="211"/>
    </location>
</feature>
<feature type="helix" evidence="3">
    <location>
        <begin position="213"/>
        <end position="215"/>
    </location>
</feature>
<feature type="helix" evidence="3">
    <location>
        <begin position="220"/>
        <end position="250"/>
    </location>
</feature>
<feature type="helix" evidence="3">
    <location>
        <begin position="253"/>
        <end position="261"/>
    </location>
</feature>
<feature type="helix" evidence="3">
    <location>
        <begin position="263"/>
        <end position="265"/>
    </location>
</feature>
<feature type="helix" evidence="3">
    <location>
        <begin position="266"/>
        <end position="275"/>
    </location>
</feature>
<feature type="strand" evidence="3">
    <location>
        <begin position="284"/>
        <end position="290"/>
    </location>
</feature>
<feature type="strand" evidence="3">
    <location>
        <begin position="292"/>
        <end position="294"/>
    </location>
</feature>
<feature type="strand" evidence="3">
    <location>
        <begin position="297"/>
        <end position="299"/>
    </location>
</feature>
<feature type="strand" evidence="3">
    <location>
        <begin position="304"/>
        <end position="307"/>
    </location>
</feature>
<feature type="helix" evidence="3">
    <location>
        <begin position="309"/>
        <end position="313"/>
    </location>
</feature>
<feature type="turn" evidence="3">
    <location>
        <begin position="316"/>
        <end position="318"/>
    </location>
</feature>
<feature type="strand" evidence="3">
    <location>
        <begin position="319"/>
        <end position="321"/>
    </location>
</feature>
<feature type="helix" evidence="3">
    <location>
        <begin position="341"/>
        <end position="343"/>
    </location>
</feature>
<feature type="helix" evidence="3">
    <location>
        <begin position="348"/>
        <end position="365"/>
    </location>
</feature>
<feature type="strand" evidence="3">
    <location>
        <begin position="370"/>
        <end position="373"/>
    </location>
</feature>
<feature type="helix" evidence="3">
    <location>
        <begin position="375"/>
        <end position="377"/>
    </location>
</feature>
<feature type="strand" evidence="3">
    <location>
        <begin position="383"/>
        <end position="386"/>
    </location>
</feature>
<feature type="strand" evidence="3">
    <location>
        <begin position="393"/>
        <end position="395"/>
    </location>
</feature>